<name>DPPC_LACLM</name>
<proteinExistence type="evidence at protein level"/>
<keyword id="KW-1003">Cell membrane</keyword>
<keyword id="KW-0472">Membrane</keyword>
<keyword id="KW-0571">Peptide transport</keyword>
<keyword id="KW-0653">Protein transport</keyword>
<keyword id="KW-0812">Transmembrane</keyword>
<keyword id="KW-1133">Transmembrane helix</keyword>
<keyword id="KW-0813">Transport</keyword>
<sequence length="343" mass="37518">MENLNKDFTLVGSKGSDSTEKIAKPALSFFQDAWRRFKKNKIALVAMWIIAITLVFSVISAFVVPQSKANYFNPNKSQVYGNLPPKLSGDLPFWNGDFKAPGSAEKTDVYKAQGVPEKDKYVFGTDKYGRSLAKRTVVGLRISLIIALAAALIDLVIGVTYGIISGWMGGKVDMVMQRIIEIIQSVPNLVVVTMLALLLGQGISSIIIAIGLFAWTGMARQVRNMVLSYKERDFVLASKTLGQSTWKIAVKHLLPNVSGVIVVQIMFDIPSMIMYEAVLSAINLGVKPPTSSLGTLINDGIASLQFYPFQLIIPAIVLSVLSLTFIFFGDGLRDAFDPRASED</sequence>
<protein>
    <recommendedName>
        <fullName evidence="5">Dipeptide transport system permease protein DppC</fullName>
    </recommendedName>
</protein>
<accession>A2RI76</accession>
<accession>Q93QH5</accession>
<evidence type="ECO:0000255" key="1"/>
<evidence type="ECO:0000255" key="2">
    <source>
        <dbReference type="PROSITE-ProRule" id="PRU00441"/>
    </source>
</evidence>
<evidence type="ECO:0000269" key="3">
    <source>
    </source>
</evidence>
<evidence type="ECO:0000303" key="4">
    <source>
    </source>
</evidence>
<evidence type="ECO:0000305" key="5"/>
<evidence type="ECO:0000305" key="6">
    <source>
    </source>
</evidence>
<evidence type="ECO:0000312" key="7">
    <source>
        <dbReference type="EMBL" id="CAL96970.1"/>
    </source>
</evidence>
<comment type="function">
    <text evidence="3 5">Part of the ABC transporter DppABCDF involved in dipeptide transport (PubMed:11409543). Responsible for the translocation of the substrate across the membrane (Probable).</text>
</comment>
<comment type="subunit">
    <text evidence="6">The complex is composed of two ATP-binding proteins (DppD and DppF), two transmembrane proteins (DppB and DppC) and a solute-binding protein (DppA).</text>
</comment>
<comment type="subcellular location">
    <subcellularLocation>
        <location evidence="5">Cell membrane</location>
        <topology evidence="1">Multi-pass membrane protein</topology>
    </subcellularLocation>
</comment>
<comment type="similarity">
    <text evidence="5">Belongs to the binding-protein-dependent transport system permease family. OppBC subfamily.</text>
</comment>
<gene>
    <name evidence="4" type="primary">dppC</name>
    <name evidence="7" type="ordered locus">llmg_0365</name>
</gene>
<organism>
    <name type="scientific">Lactococcus lactis subsp. cremoris (strain MG1363)</name>
    <dbReference type="NCBI Taxonomy" id="416870"/>
    <lineage>
        <taxon>Bacteria</taxon>
        <taxon>Bacillati</taxon>
        <taxon>Bacillota</taxon>
        <taxon>Bacilli</taxon>
        <taxon>Lactobacillales</taxon>
        <taxon>Streptococcaceae</taxon>
        <taxon>Lactococcus</taxon>
        <taxon>Lactococcus cremoris subsp. cremoris</taxon>
    </lineage>
</organism>
<reference key="1">
    <citation type="journal article" date="2001" name="Arch. Microbiol.">
        <title>Genetic and functional characterization of dpp genes encoding a dipeptide transport system in Lactococcus lactis.</title>
        <authorList>
            <person name="Sanz Y."/>
            <person name="Lanfermeijer F.C."/>
            <person name="Renault P."/>
            <person name="Bolotin A."/>
            <person name="Konings W.N."/>
            <person name="Poolman B."/>
        </authorList>
    </citation>
    <scope>NUCLEOTIDE SEQUENCE [GENOMIC DNA]</scope>
    <scope>FUNCTION</scope>
    <scope>SUBUNIT</scope>
    <source>
        <strain>MG1363</strain>
    </source>
</reference>
<reference key="2">
    <citation type="journal article" date="2007" name="J. Bacteriol.">
        <title>The complete genome sequence of the lactic acid bacterial paradigm Lactococcus lactis subsp. cremoris MG1363.</title>
        <authorList>
            <person name="Wegmann U."/>
            <person name="O'Connell-Motherway M."/>
            <person name="Zomer A."/>
            <person name="Buist G."/>
            <person name="Shearman C."/>
            <person name="Canchaya C."/>
            <person name="Ventura M."/>
            <person name="Goesmann A."/>
            <person name="Gasson M.J."/>
            <person name="Kuipers O.P."/>
            <person name="van Sinderen D."/>
            <person name="Kok J."/>
        </authorList>
    </citation>
    <scope>NUCLEOTIDE SEQUENCE [LARGE SCALE GENOMIC DNA]</scope>
    <source>
        <strain>MG1363</strain>
    </source>
</reference>
<dbReference type="EMBL" id="AF247635">
    <property type="protein sequence ID" value="AAK58899.1"/>
    <property type="molecule type" value="Genomic_DNA"/>
</dbReference>
<dbReference type="EMBL" id="AM406671">
    <property type="protein sequence ID" value="CAL96970.1"/>
    <property type="molecule type" value="Genomic_DNA"/>
</dbReference>
<dbReference type="RefSeq" id="WP_011834422.1">
    <property type="nucleotide sequence ID" value="NC_009004.1"/>
</dbReference>
<dbReference type="SMR" id="A2RI76"/>
<dbReference type="STRING" id="416870.llmg_0365"/>
<dbReference type="GeneID" id="61108669"/>
<dbReference type="KEGG" id="llm:llmg_0365"/>
<dbReference type="eggNOG" id="COG1173">
    <property type="taxonomic scope" value="Bacteria"/>
</dbReference>
<dbReference type="HOGENOM" id="CLU_028518_1_0_9"/>
<dbReference type="OrthoDB" id="9797472at2"/>
<dbReference type="PhylomeDB" id="A2RI76"/>
<dbReference type="Proteomes" id="UP000000364">
    <property type="component" value="Chromosome"/>
</dbReference>
<dbReference type="GO" id="GO:0005886">
    <property type="term" value="C:plasma membrane"/>
    <property type="evidence" value="ECO:0007669"/>
    <property type="project" value="UniProtKB-SubCell"/>
</dbReference>
<dbReference type="GO" id="GO:0015833">
    <property type="term" value="P:peptide transport"/>
    <property type="evidence" value="ECO:0007669"/>
    <property type="project" value="UniProtKB-KW"/>
</dbReference>
<dbReference type="GO" id="GO:0015031">
    <property type="term" value="P:protein transport"/>
    <property type="evidence" value="ECO:0007669"/>
    <property type="project" value="UniProtKB-KW"/>
</dbReference>
<dbReference type="GO" id="GO:0055085">
    <property type="term" value="P:transmembrane transport"/>
    <property type="evidence" value="ECO:0007669"/>
    <property type="project" value="InterPro"/>
</dbReference>
<dbReference type="CDD" id="cd06261">
    <property type="entry name" value="TM_PBP2"/>
    <property type="match status" value="1"/>
</dbReference>
<dbReference type="Gene3D" id="1.10.3720.10">
    <property type="entry name" value="MetI-like"/>
    <property type="match status" value="1"/>
</dbReference>
<dbReference type="InterPro" id="IPR050366">
    <property type="entry name" value="BP-dependent_transpt_permease"/>
</dbReference>
<dbReference type="InterPro" id="IPR000515">
    <property type="entry name" value="MetI-like"/>
</dbReference>
<dbReference type="InterPro" id="IPR035906">
    <property type="entry name" value="MetI-like_sf"/>
</dbReference>
<dbReference type="InterPro" id="IPR025966">
    <property type="entry name" value="OppC_N"/>
</dbReference>
<dbReference type="PANTHER" id="PTHR43386:SF24">
    <property type="entry name" value="OLIGOPEPTIDE TRANSPORT SYSTEM PERMEASE PROTEIN AMID"/>
    <property type="match status" value="1"/>
</dbReference>
<dbReference type="PANTHER" id="PTHR43386">
    <property type="entry name" value="OLIGOPEPTIDE TRANSPORT SYSTEM PERMEASE PROTEIN APPC"/>
    <property type="match status" value="1"/>
</dbReference>
<dbReference type="Pfam" id="PF00528">
    <property type="entry name" value="BPD_transp_1"/>
    <property type="match status" value="1"/>
</dbReference>
<dbReference type="Pfam" id="PF12911">
    <property type="entry name" value="OppC_N"/>
    <property type="match status" value="1"/>
</dbReference>
<dbReference type="SUPFAM" id="SSF161098">
    <property type="entry name" value="MetI-like"/>
    <property type="match status" value="1"/>
</dbReference>
<dbReference type="PROSITE" id="PS50928">
    <property type="entry name" value="ABC_TM1"/>
    <property type="match status" value="1"/>
</dbReference>
<feature type="chain" id="PRO_0000452195" description="Dipeptide transport system permease protein DppC">
    <location>
        <begin position="1"/>
        <end position="343"/>
    </location>
</feature>
<feature type="transmembrane region" description="Helical" evidence="1">
    <location>
        <begin position="44"/>
        <end position="64"/>
    </location>
</feature>
<feature type="transmembrane region" description="Helical" evidence="1">
    <location>
        <begin position="144"/>
        <end position="164"/>
    </location>
</feature>
<feature type="transmembrane region" description="Helical" evidence="1">
    <location>
        <begin position="195"/>
        <end position="215"/>
    </location>
</feature>
<feature type="transmembrane region" description="Helical" evidence="1">
    <location>
        <begin position="259"/>
        <end position="279"/>
    </location>
</feature>
<feature type="transmembrane region" description="Helical" evidence="1">
    <location>
        <begin position="309"/>
        <end position="329"/>
    </location>
</feature>
<feature type="domain" description="ABC transmembrane type-1" evidence="2">
    <location>
        <begin position="140"/>
        <end position="329"/>
    </location>
</feature>